<protein>
    <recommendedName>
        <fullName evidence="1">23S rRNA (uracil(747)-C(5))-methyltransferase RlmC</fullName>
        <ecNumber evidence="1">2.1.1.189</ecNumber>
    </recommendedName>
    <alternativeName>
        <fullName evidence="1">23S rRNA(m5U747)-methyltransferase</fullName>
    </alternativeName>
</protein>
<keyword id="KW-0004">4Fe-4S</keyword>
<keyword id="KW-0408">Iron</keyword>
<keyword id="KW-0411">Iron-sulfur</keyword>
<keyword id="KW-0479">Metal-binding</keyword>
<keyword id="KW-0489">Methyltransferase</keyword>
<keyword id="KW-1185">Reference proteome</keyword>
<keyword id="KW-0698">rRNA processing</keyword>
<keyword id="KW-0949">S-adenosyl-L-methionine</keyword>
<keyword id="KW-0808">Transferase</keyword>
<evidence type="ECO:0000255" key="1">
    <source>
        <dbReference type="HAMAP-Rule" id="MF_01012"/>
    </source>
</evidence>
<dbReference type="EC" id="2.1.1.189" evidence="1"/>
<dbReference type="EMBL" id="CP000569">
    <property type="protein sequence ID" value="ABN74204.1"/>
    <property type="molecule type" value="Genomic_DNA"/>
</dbReference>
<dbReference type="RefSeq" id="WP_009875490.1">
    <property type="nucleotide sequence ID" value="NC_009053.1"/>
</dbReference>
<dbReference type="SMR" id="A3N1B8"/>
<dbReference type="STRING" id="416269.APL_1112"/>
<dbReference type="EnsemblBacteria" id="ABN74204">
    <property type="protein sequence ID" value="ABN74204"/>
    <property type="gene ID" value="APL_1112"/>
</dbReference>
<dbReference type="KEGG" id="apl:APL_1112"/>
<dbReference type="PATRIC" id="fig|416269.6.peg.1160"/>
<dbReference type="eggNOG" id="COG2265">
    <property type="taxonomic scope" value="Bacteria"/>
</dbReference>
<dbReference type="HOGENOM" id="CLU_014689_0_0_6"/>
<dbReference type="Proteomes" id="UP000001432">
    <property type="component" value="Chromosome"/>
</dbReference>
<dbReference type="GO" id="GO:0051539">
    <property type="term" value="F:4 iron, 4 sulfur cluster binding"/>
    <property type="evidence" value="ECO:0007669"/>
    <property type="project" value="UniProtKB-KW"/>
</dbReference>
<dbReference type="GO" id="GO:0005506">
    <property type="term" value="F:iron ion binding"/>
    <property type="evidence" value="ECO:0007669"/>
    <property type="project" value="UniProtKB-UniRule"/>
</dbReference>
<dbReference type="GO" id="GO:0070041">
    <property type="term" value="F:rRNA (uridine-C5-)-methyltransferase activity"/>
    <property type="evidence" value="ECO:0007669"/>
    <property type="project" value="UniProtKB-UniRule"/>
</dbReference>
<dbReference type="GO" id="GO:0070475">
    <property type="term" value="P:rRNA base methylation"/>
    <property type="evidence" value="ECO:0007669"/>
    <property type="project" value="TreeGrafter"/>
</dbReference>
<dbReference type="CDD" id="cd02440">
    <property type="entry name" value="AdoMet_MTases"/>
    <property type="match status" value="1"/>
</dbReference>
<dbReference type="Gene3D" id="2.40.50.1070">
    <property type="match status" value="1"/>
</dbReference>
<dbReference type="Gene3D" id="3.40.50.150">
    <property type="entry name" value="Vaccinia Virus protein VP39"/>
    <property type="match status" value="1"/>
</dbReference>
<dbReference type="HAMAP" id="MF_01012">
    <property type="entry name" value="23SrRNA_methyltr_RlmC"/>
    <property type="match status" value="1"/>
</dbReference>
<dbReference type="InterPro" id="IPR011825">
    <property type="entry name" value="23SrRNA_MeTrfase_RlmC"/>
</dbReference>
<dbReference type="InterPro" id="IPR030390">
    <property type="entry name" value="MeTrfase_TrmA_AS"/>
</dbReference>
<dbReference type="InterPro" id="IPR030391">
    <property type="entry name" value="MeTrfase_TrmA_CS"/>
</dbReference>
<dbReference type="InterPro" id="IPR029063">
    <property type="entry name" value="SAM-dependent_MTases_sf"/>
</dbReference>
<dbReference type="InterPro" id="IPR010280">
    <property type="entry name" value="U5_MeTrfase_fam"/>
</dbReference>
<dbReference type="NCBIfam" id="TIGR02085">
    <property type="entry name" value="meth_trns_rumB"/>
    <property type="match status" value="1"/>
</dbReference>
<dbReference type="PANTHER" id="PTHR11061">
    <property type="entry name" value="RNA M5U METHYLTRANSFERASE"/>
    <property type="match status" value="1"/>
</dbReference>
<dbReference type="PANTHER" id="PTHR11061:SF30">
    <property type="entry name" value="TRNA (URACIL(54)-C(5))-METHYLTRANSFERASE"/>
    <property type="match status" value="1"/>
</dbReference>
<dbReference type="Pfam" id="PF05958">
    <property type="entry name" value="tRNA_U5-meth_tr"/>
    <property type="match status" value="1"/>
</dbReference>
<dbReference type="SUPFAM" id="SSF53335">
    <property type="entry name" value="S-adenosyl-L-methionine-dependent methyltransferases"/>
    <property type="match status" value="1"/>
</dbReference>
<dbReference type="PROSITE" id="PS51687">
    <property type="entry name" value="SAM_MT_RNA_M5U"/>
    <property type="match status" value="1"/>
</dbReference>
<dbReference type="PROSITE" id="PS01230">
    <property type="entry name" value="TRMA_1"/>
    <property type="match status" value="1"/>
</dbReference>
<dbReference type="PROSITE" id="PS01231">
    <property type="entry name" value="TRMA_2"/>
    <property type="match status" value="1"/>
</dbReference>
<comment type="function">
    <text evidence="1">Catalyzes the formation of 5-methyl-uridine at position 747 (m5U747) in 23S rRNA.</text>
</comment>
<comment type="catalytic activity">
    <reaction evidence="1">
        <text>uridine(747) in 23S rRNA + S-adenosyl-L-methionine = 5-methyluridine(747) in 23S rRNA + S-adenosyl-L-homocysteine + H(+)</text>
        <dbReference type="Rhea" id="RHEA:42628"/>
        <dbReference type="Rhea" id="RHEA-COMP:10154"/>
        <dbReference type="Rhea" id="RHEA-COMP:10155"/>
        <dbReference type="ChEBI" id="CHEBI:15378"/>
        <dbReference type="ChEBI" id="CHEBI:57856"/>
        <dbReference type="ChEBI" id="CHEBI:59789"/>
        <dbReference type="ChEBI" id="CHEBI:65315"/>
        <dbReference type="ChEBI" id="CHEBI:74447"/>
        <dbReference type="EC" id="2.1.1.189"/>
    </reaction>
</comment>
<comment type="similarity">
    <text evidence="1">Belongs to the class I-like SAM-binding methyltransferase superfamily. RNA M5U methyltransferase family. RlmC subfamily.</text>
</comment>
<feature type="chain" id="PRO_0000414815" description="23S rRNA (uracil(747)-C(5))-methyltransferase RlmC">
    <location>
        <begin position="1"/>
        <end position="391"/>
    </location>
</feature>
<feature type="active site" description="Nucleophile" evidence="1">
    <location>
        <position position="349"/>
    </location>
</feature>
<feature type="binding site" evidence="1">
    <location>
        <position position="5"/>
    </location>
    <ligand>
        <name>[4Fe-4S] cluster</name>
        <dbReference type="ChEBI" id="CHEBI:49883"/>
    </ligand>
</feature>
<feature type="binding site" evidence="1">
    <location>
        <position position="13"/>
    </location>
    <ligand>
        <name>[4Fe-4S] cluster</name>
        <dbReference type="ChEBI" id="CHEBI:49883"/>
    </ligand>
</feature>
<feature type="binding site" evidence="1">
    <location>
        <position position="16"/>
    </location>
    <ligand>
        <name>[4Fe-4S] cluster</name>
        <dbReference type="ChEBI" id="CHEBI:49883"/>
    </ligand>
</feature>
<feature type="binding site" evidence="1">
    <location>
        <position position="95"/>
    </location>
    <ligand>
        <name>[4Fe-4S] cluster</name>
        <dbReference type="ChEBI" id="CHEBI:49883"/>
    </ligand>
</feature>
<feature type="binding site" evidence="1">
    <location>
        <position position="220"/>
    </location>
    <ligand>
        <name>S-adenosyl-L-methionine</name>
        <dbReference type="ChEBI" id="CHEBI:59789"/>
    </ligand>
</feature>
<feature type="binding site" evidence="1">
    <location>
        <position position="249"/>
    </location>
    <ligand>
        <name>S-adenosyl-L-methionine</name>
        <dbReference type="ChEBI" id="CHEBI:59789"/>
    </ligand>
</feature>
<feature type="binding site" evidence="1">
    <location>
        <position position="276"/>
    </location>
    <ligand>
        <name>S-adenosyl-L-methionine</name>
        <dbReference type="ChEBI" id="CHEBI:59789"/>
    </ligand>
</feature>
<feature type="binding site" evidence="1">
    <location>
        <position position="322"/>
    </location>
    <ligand>
        <name>S-adenosyl-L-methionine</name>
        <dbReference type="ChEBI" id="CHEBI:59789"/>
    </ligand>
</feature>
<name>RLMC_ACTP2</name>
<gene>
    <name evidence="1" type="primary">rlmC</name>
    <name type="ordered locus">APL_1112</name>
</gene>
<proteinExistence type="inferred from homology"/>
<reference key="1">
    <citation type="journal article" date="2008" name="J. Bacteriol.">
        <title>The complete genome sequence of Actinobacillus pleuropneumoniae L20 (serotype 5b).</title>
        <authorList>
            <person name="Foote S.J."/>
            <person name="Bosse J.T."/>
            <person name="Bouevitch A.B."/>
            <person name="Langford P.R."/>
            <person name="Young N.M."/>
            <person name="Nash J.H.E."/>
        </authorList>
    </citation>
    <scope>NUCLEOTIDE SEQUENCE [LARGE SCALE GENOMIC DNA]</scope>
    <source>
        <strain>L20</strain>
    </source>
</reference>
<accession>A3N1B8</accession>
<organism>
    <name type="scientific">Actinobacillus pleuropneumoniae serotype 5b (strain L20)</name>
    <dbReference type="NCBI Taxonomy" id="416269"/>
    <lineage>
        <taxon>Bacteria</taxon>
        <taxon>Pseudomonadati</taxon>
        <taxon>Pseudomonadota</taxon>
        <taxon>Gammaproteobacteria</taxon>
        <taxon>Pasteurellales</taxon>
        <taxon>Pasteurellaceae</taxon>
        <taxon>Actinobacillus</taxon>
    </lineage>
</organism>
<sequence length="391" mass="44153">MILNCPHFQQQDCVSCQWLEKPYATQLTDKEIDLKRLISPFILQNFTEILPPVQSSQKQFRNKAKMVVSGSVERPILGILKDQTDPQSGIDLCDCPLYPTEFEALFPILKDFIARAGLVPYNISKKKGELKYILITQSRYNQSIMLRFVLKSEQKRPLVERELPNLLAKLPKDSVVSLNIQPQHAAILEGETEIFLTEKTTIEENFNDIPLFIRPQGFFQTNPNVASQLYATAQNWIKDLAIQQFWDLFCGVGGFGLHCAKALQEKNENVQLTGIEISASAIASATKSAEQLQLKNITFASLDSAQFALNEKSATPDLVIVNPPRRGIGKPLAEFLNQLGTPYLIYSSCNARTMAQDFEALSNYSLQKVQLFDMFPHTSHYEVLTFLVKKS</sequence>